<reference key="1">
    <citation type="journal article" date="2000" name="Nature">
        <title>Complete DNA sequence of a serogroup A strain of Neisseria meningitidis Z2491.</title>
        <authorList>
            <person name="Parkhill J."/>
            <person name="Achtman M."/>
            <person name="James K.D."/>
            <person name="Bentley S.D."/>
            <person name="Churcher C.M."/>
            <person name="Klee S.R."/>
            <person name="Morelli G."/>
            <person name="Basham D."/>
            <person name="Brown D."/>
            <person name="Chillingworth T."/>
            <person name="Davies R.M."/>
            <person name="Davis P."/>
            <person name="Devlin K."/>
            <person name="Feltwell T."/>
            <person name="Hamlin N."/>
            <person name="Holroyd S."/>
            <person name="Jagels K."/>
            <person name="Leather S."/>
            <person name="Moule S."/>
            <person name="Mungall K.L."/>
            <person name="Quail M.A."/>
            <person name="Rajandream M.A."/>
            <person name="Rutherford K.M."/>
            <person name="Simmonds M."/>
            <person name="Skelton J."/>
            <person name="Whitehead S."/>
            <person name="Spratt B.G."/>
            <person name="Barrell B.G."/>
        </authorList>
    </citation>
    <scope>NUCLEOTIDE SEQUENCE [LARGE SCALE GENOMIC DNA]</scope>
    <source>
        <strain>DSM 15465 / Z2491</strain>
    </source>
</reference>
<name>SYFB_NEIMA</name>
<gene>
    <name type="primary">pheT</name>
    <name type="ordered locus">NMA0937</name>
</gene>
<keyword id="KW-0030">Aminoacyl-tRNA synthetase</keyword>
<keyword id="KW-0067">ATP-binding</keyword>
<keyword id="KW-0963">Cytoplasm</keyword>
<keyword id="KW-0436">Ligase</keyword>
<keyword id="KW-0460">Magnesium</keyword>
<keyword id="KW-0479">Metal-binding</keyword>
<keyword id="KW-0547">Nucleotide-binding</keyword>
<keyword id="KW-0648">Protein biosynthesis</keyword>
<keyword id="KW-0694">RNA-binding</keyword>
<keyword id="KW-0820">tRNA-binding</keyword>
<comment type="catalytic activity">
    <reaction>
        <text>tRNA(Phe) + L-phenylalanine + ATP = L-phenylalanyl-tRNA(Phe) + AMP + diphosphate + H(+)</text>
        <dbReference type="Rhea" id="RHEA:19413"/>
        <dbReference type="Rhea" id="RHEA-COMP:9668"/>
        <dbReference type="Rhea" id="RHEA-COMP:9699"/>
        <dbReference type="ChEBI" id="CHEBI:15378"/>
        <dbReference type="ChEBI" id="CHEBI:30616"/>
        <dbReference type="ChEBI" id="CHEBI:33019"/>
        <dbReference type="ChEBI" id="CHEBI:58095"/>
        <dbReference type="ChEBI" id="CHEBI:78442"/>
        <dbReference type="ChEBI" id="CHEBI:78531"/>
        <dbReference type="ChEBI" id="CHEBI:456215"/>
        <dbReference type="EC" id="6.1.1.20"/>
    </reaction>
</comment>
<comment type="cofactor">
    <cofactor evidence="1">
        <name>Mg(2+)</name>
        <dbReference type="ChEBI" id="CHEBI:18420"/>
    </cofactor>
    <text evidence="1">Binds 2 magnesium ions per tetramer.</text>
</comment>
<comment type="subunit">
    <text evidence="1">Tetramer of two alpha and two beta subunits.</text>
</comment>
<comment type="subcellular location">
    <subcellularLocation>
        <location evidence="1">Cytoplasm</location>
    </subcellularLocation>
</comment>
<comment type="similarity">
    <text evidence="2">Belongs to the phenylalanyl-tRNA synthetase beta subunit family. Type 1 subfamily.</text>
</comment>
<accession>Q9JVA0</accession>
<accession>A1IQX9</accession>
<dbReference type="EC" id="6.1.1.20"/>
<dbReference type="EMBL" id="AL157959">
    <property type="protein sequence ID" value="CAM08163.1"/>
    <property type="molecule type" value="Genomic_DNA"/>
</dbReference>
<dbReference type="PIR" id="A81940">
    <property type="entry name" value="A81940"/>
</dbReference>
<dbReference type="RefSeq" id="WP_002246073.1">
    <property type="nucleotide sequence ID" value="NC_003116.1"/>
</dbReference>
<dbReference type="SMR" id="Q9JVA0"/>
<dbReference type="EnsemblBacteria" id="CAM08163">
    <property type="protein sequence ID" value="CAM08163"/>
    <property type="gene ID" value="NMA0937"/>
</dbReference>
<dbReference type="GeneID" id="93386446"/>
<dbReference type="KEGG" id="nma:NMA0937"/>
<dbReference type="HOGENOM" id="CLU_016891_0_0_4"/>
<dbReference type="Proteomes" id="UP000000626">
    <property type="component" value="Chromosome"/>
</dbReference>
<dbReference type="GO" id="GO:0009328">
    <property type="term" value="C:phenylalanine-tRNA ligase complex"/>
    <property type="evidence" value="ECO:0007669"/>
    <property type="project" value="TreeGrafter"/>
</dbReference>
<dbReference type="GO" id="GO:0005524">
    <property type="term" value="F:ATP binding"/>
    <property type="evidence" value="ECO:0007669"/>
    <property type="project" value="UniProtKB-UniRule"/>
</dbReference>
<dbReference type="GO" id="GO:0000287">
    <property type="term" value="F:magnesium ion binding"/>
    <property type="evidence" value="ECO:0007669"/>
    <property type="project" value="UniProtKB-UniRule"/>
</dbReference>
<dbReference type="GO" id="GO:0004826">
    <property type="term" value="F:phenylalanine-tRNA ligase activity"/>
    <property type="evidence" value="ECO:0007669"/>
    <property type="project" value="UniProtKB-UniRule"/>
</dbReference>
<dbReference type="GO" id="GO:0000049">
    <property type="term" value="F:tRNA binding"/>
    <property type="evidence" value="ECO:0007669"/>
    <property type="project" value="UniProtKB-KW"/>
</dbReference>
<dbReference type="GO" id="GO:0006432">
    <property type="term" value="P:phenylalanyl-tRNA aminoacylation"/>
    <property type="evidence" value="ECO:0007669"/>
    <property type="project" value="UniProtKB-UniRule"/>
</dbReference>
<dbReference type="CDD" id="cd00769">
    <property type="entry name" value="PheRS_beta_core"/>
    <property type="match status" value="1"/>
</dbReference>
<dbReference type="CDD" id="cd02796">
    <property type="entry name" value="tRNA_bind_bactPheRS"/>
    <property type="match status" value="1"/>
</dbReference>
<dbReference type="FunFam" id="2.40.50.140:FF:000045">
    <property type="entry name" value="Phenylalanine--tRNA ligase beta subunit"/>
    <property type="match status" value="1"/>
</dbReference>
<dbReference type="FunFam" id="3.30.56.10:FF:000002">
    <property type="entry name" value="Phenylalanine--tRNA ligase beta subunit"/>
    <property type="match status" value="1"/>
</dbReference>
<dbReference type="FunFam" id="3.30.70.380:FF:000001">
    <property type="entry name" value="Phenylalanine--tRNA ligase beta subunit"/>
    <property type="match status" value="1"/>
</dbReference>
<dbReference type="FunFam" id="3.30.930.10:FF:000022">
    <property type="entry name" value="Phenylalanine--tRNA ligase beta subunit"/>
    <property type="match status" value="1"/>
</dbReference>
<dbReference type="FunFam" id="3.50.40.10:FF:000001">
    <property type="entry name" value="Phenylalanine--tRNA ligase beta subunit"/>
    <property type="match status" value="1"/>
</dbReference>
<dbReference type="Gene3D" id="3.30.56.10">
    <property type="match status" value="2"/>
</dbReference>
<dbReference type="Gene3D" id="3.30.930.10">
    <property type="entry name" value="Bira Bifunctional Protein, Domain 2"/>
    <property type="match status" value="1"/>
</dbReference>
<dbReference type="Gene3D" id="3.30.70.380">
    <property type="entry name" value="Ferrodoxin-fold anticodon-binding domain"/>
    <property type="match status" value="1"/>
</dbReference>
<dbReference type="Gene3D" id="2.40.50.140">
    <property type="entry name" value="Nucleic acid-binding proteins"/>
    <property type="match status" value="1"/>
</dbReference>
<dbReference type="Gene3D" id="3.50.40.10">
    <property type="entry name" value="Phenylalanyl-trna Synthetase, Chain B, domain 3"/>
    <property type="match status" value="1"/>
</dbReference>
<dbReference type="HAMAP" id="MF_00283">
    <property type="entry name" value="Phe_tRNA_synth_beta1"/>
    <property type="match status" value="1"/>
</dbReference>
<dbReference type="InterPro" id="IPR045864">
    <property type="entry name" value="aa-tRNA-synth_II/BPL/LPL"/>
</dbReference>
<dbReference type="InterPro" id="IPR005146">
    <property type="entry name" value="B3/B4_tRNA-bd"/>
</dbReference>
<dbReference type="InterPro" id="IPR009061">
    <property type="entry name" value="DNA-bd_dom_put_sf"/>
</dbReference>
<dbReference type="InterPro" id="IPR005121">
    <property type="entry name" value="Fdx_antiC-bd"/>
</dbReference>
<dbReference type="InterPro" id="IPR036690">
    <property type="entry name" value="Fdx_antiC-bd_sf"/>
</dbReference>
<dbReference type="InterPro" id="IPR012340">
    <property type="entry name" value="NA-bd_OB-fold"/>
</dbReference>
<dbReference type="InterPro" id="IPR045060">
    <property type="entry name" value="Phe-tRNA-ligase_IIc_bsu"/>
</dbReference>
<dbReference type="InterPro" id="IPR004532">
    <property type="entry name" value="Phe-tRNA-ligase_IIc_bsu_bact"/>
</dbReference>
<dbReference type="InterPro" id="IPR020825">
    <property type="entry name" value="Phe-tRNA_synthase-like_B3/B4"/>
</dbReference>
<dbReference type="InterPro" id="IPR041616">
    <property type="entry name" value="PheRS_beta_core"/>
</dbReference>
<dbReference type="InterPro" id="IPR002547">
    <property type="entry name" value="tRNA-bd_dom"/>
</dbReference>
<dbReference type="InterPro" id="IPR033714">
    <property type="entry name" value="tRNA_bind_bactPheRS"/>
</dbReference>
<dbReference type="InterPro" id="IPR005147">
    <property type="entry name" value="tRNA_synthase_B5-dom"/>
</dbReference>
<dbReference type="NCBIfam" id="TIGR00472">
    <property type="entry name" value="pheT_bact"/>
    <property type="match status" value="1"/>
</dbReference>
<dbReference type="NCBIfam" id="NF045760">
    <property type="entry name" value="YtpR"/>
    <property type="match status" value="1"/>
</dbReference>
<dbReference type="PANTHER" id="PTHR10947:SF0">
    <property type="entry name" value="PHENYLALANINE--TRNA LIGASE BETA SUBUNIT"/>
    <property type="match status" value="1"/>
</dbReference>
<dbReference type="PANTHER" id="PTHR10947">
    <property type="entry name" value="PHENYLALANYL-TRNA SYNTHETASE BETA CHAIN AND LEUCINE-RICH REPEAT-CONTAINING PROTEIN 47"/>
    <property type="match status" value="1"/>
</dbReference>
<dbReference type="Pfam" id="PF03483">
    <property type="entry name" value="B3_4"/>
    <property type="match status" value="1"/>
</dbReference>
<dbReference type="Pfam" id="PF03484">
    <property type="entry name" value="B5"/>
    <property type="match status" value="1"/>
</dbReference>
<dbReference type="Pfam" id="PF03147">
    <property type="entry name" value="FDX-ACB"/>
    <property type="match status" value="1"/>
</dbReference>
<dbReference type="Pfam" id="PF01588">
    <property type="entry name" value="tRNA_bind"/>
    <property type="match status" value="1"/>
</dbReference>
<dbReference type="Pfam" id="PF17759">
    <property type="entry name" value="tRNA_synthFbeta"/>
    <property type="match status" value="1"/>
</dbReference>
<dbReference type="SMART" id="SM00873">
    <property type="entry name" value="B3_4"/>
    <property type="match status" value="1"/>
</dbReference>
<dbReference type="SMART" id="SM00874">
    <property type="entry name" value="B5"/>
    <property type="match status" value="1"/>
</dbReference>
<dbReference type="SMART" id="SM00896">
    <property type="entry name" value="FDX-ACB"/>
    <property type="match status" value="1"/>
</dbReference>
<dbReference type="SUPFAM" id="SSF54991">
    <property type="entry name" value="Anticodon-binding domain of PheRS"/>
    <property type="match status" value="1"/>
</dbReference>
<dbReference type="SUPFAM" id="SSF55681">
    <property type="entry name" value="Class II aaRS and biotin synthetases"/>
    <property type="match status" value="1"/>
</dbReference>
<dbReference type="SUPFAM" id="SSF50249">
    <property type="entry name" value="Nucleic acid-binding proteins"/>
    <property type="match status" value="1"/>
</dbReference>
<dbReference type="SUPFAM" id="SSF56037">
    <property type="entry name" value="PheT/TilS domain"/>
    <property type="match status" value="1"/>
</dbReference>
<dbReference type="SUPFAM" id="SSF46955">
    <property type="entry name" value="Putative DNA-binding domain"/>
    <property type="match status" value="1"/>
</dbReference>
<dbReference type="PROSITE" id="PS51483">
    <property type="entry name" value="B5"/>
    <property type="match status" value="1"/>
</dbReference>
<dbReference type="PROSITE" id="PS51447">
    <property type="entry name" value="FDX_ACB"/>
    <property type="match status" value="1"/>
</dbReference>
<dbReference type="PROSITE" id="PS50886">
    <property type="entry name" value="TRBD"/>
    <property type="match status" value="1"/>
</dbReference>
<organism>
    <name type="scientific">Neisseria meningitidis serogroup A / serotype 4A (strain DSM 15465 / Z2491)</name>
    <dbReference type="NCBI Taxonomy" id="122587"/>
    <lineage>
        <taxon>Bacteria</taxon>
        <taxon>Pseudomonadati</taxon>
        <taxon>Pseudomonadota</taxon>
        <taxon>Betaproteobacteria</taxon>
        <taxon>Neisseriales</taxon>
        <taxon>Neisseriaceae</taxon>
        <taxon>Neisseria</taxon>
    </lineage>
</organism>
<feature type="chain" id="PRO_0000126918" description="Phenylalanine--tRNA ligase beta subunit">
    <location>
        <begin position="1"/>
        <end position="787"/>
    </location>
</feature>
<feature type="domain" description="tRNA-binding">
    <location>
        <begin position="39"/>
        <end position="149"/>
    </location>
</feature>
<feature type="domain" description="B5">
    <location>
        <begin position="400"/>
        <end position="475"/>
    </location>
</feature>
<feature type="domain" description="FDX-ACB">
    <location>
        <begin position="694"/>
        <end position="786"/>
    </location>
</feature>
<feature type="binding site" evidence="1">
    <location>
        <position position="453"/>
    </location>
    <ligand>
        <name>Mg(2+)</name>
        <dbReference type="ChEBI" id="CHEBI:18420"/>
        <note>shared with alpha subunit</note>
    </ligand>
</feature>
<feature type="binding site" evidence="1">
    <location>
        <position position="459"/>
    </location>
    <ligand>
        <name>Mg(2+)</name>
        <dbReference type="ChEBI" id="CHEBI:18420"/>
        <note>shared with alpha subunit</note>
    </ligand>
</feature>
<feature type="binding site" evidence="1">
    <location>
        <position position="462"/>
    </location>
    <ligand>
        <name>Mg(2+)</name>
        <dbReference type="ChEBI" id="CHEBI:18420"/>
        <note>shared with alpha subunit</note>
    </ligand>
</feature>
<feature type="binding site" evidence="1">
    <location>
        <position position="463"/>
    </location>
    <ligand>
        <name>Mg(2+)</name>
        <dbReference type="ChEBI" id="CHEBI:18420"/>
        <note>shared with alpha subunit</note>
    </ligand>
</feature>
<sequence length="787" mass="86109">MQFSYSWLKTQADTELSSDKLEHLLTMSGLEVEEAETAAPAFAGVVIAEVKSVEKHPDADRLNVTRVDVGTGELVQIVCGAPNVKAGIKVPCSLPGAVLPGNFKIKPTKMRGVVSNGMLCSTDELGLPDDGVNGLHILPEDAPVGTNIREYLDLDDTLFTLKITPNRADCLSVKGIAREVSALTGCAFRQPEIRKMPSEGGKTRAVKIDAPADCGRFISRVIENVNAKAATPDWMKQRLERSGIRSISVLVDIGNYVMLEIGQPMHVFDADKLSGSLHIRRAREGETLECLNEKTVSLSENTLVVADEKGALSLAGLMGGAASAVSDGTQNIVLEAAWFAPEIIAGKSRQYGFGSDSSFRFERGVDYRLQADAIERATELVLQICGGAAGEMVEAQGELPEVKQVGLRLGRLKTVLGVDIPSEQVETILQHLGLQPEKTAEGFRVTAPSFRFDIEIEADLIEEIGRVYGYENIPDDYTSGRLKMLELPETRRPRFAVYNEMAARGYREVVSYAFVNEQWEQDFAANADPIRLQNPLAAQYAVMRSTLIGGLVEILQNNLNRKQNRVRVFEIARVFGKGSDGRFVQNERIGGLWYGAAMPEQWGGKTRNADFYDIKADVENLLKNKAVEFVKTGYPALHPGRAANIVSDGKVIGFVGELHPKWLQKYDLPQAPLVFEIDMAAVLECGKTRYRAVSKFQPVRRDLAFVMPEAMSHDDLLLVLKGAANKLVQEISVFDVYRGMGLPEGMKSVAVKVILQDMENTLTDEAVEPLIGKLIGAATAAGARLRS</sequence>
<proteinExistence type="inferred from homology"/>
<protein>
    <recommendedName>
        <fullName>Phenylalanine--tRNA ligase beta subunit</fullName>
        <ecNumber>6.1.1.20</ecNumber>
    </recommendedName>
    <alternativeName>
        <fullName>Phenylalanyl-tRNA synthetase beta subunit</fullName>
        <shortName>PheRS</shortName>
    </alternativeName>
</protein>
<evidence type="ECO:0000250" key="1"/>
<evidence type="ECO:0000305" key="2"/>